<accession>P0DKT6</accession>
<reference key="1">
    <citation type="journal article" date="2011" name="Toxicon">
        <title>An unusual phospholipase A(2) from puff adder Bitis arietans venom-a novel blocker of nicotinic acetylcholine receptors.</title>
        <authorList>
            <person name="Vulfius C.A."/>
            <person name="Gorbacheva E.V."/>
            <person name="Starkov V.G."/>
            <person name="Osipov A.V."/>
            <person name="Kasheverov I.E."/>
            <person name="Andreeva T.V."/>
            <person name="Astashev M.E."/>
            <person name="Tsetlin V.I."/>
            <person name="Utkin Y.N."/>
        </authorList>
    </citation>
    <scope>PROTEIN SEQUENCE</scope>
    <scope>CATALYTIC ACTIVITY</scope>
    <scope>COFACTOR</scope>
    <scope>SUBCELLULAR LOCATION</scope>
    <scope>SUBUNIT</scope>
    <scope>MASS SPECTROMETRY</scope>
    <source>
        <tissue>Venom</tissue>
    </source>
</reference>
<proteinExistence type="evidence at protein level"/>
<protein>
    <recommendedName>
        <fullName>Phospholipase A2 bitanarin</fullName>
        <shortName>svPLA2</shortName>
        <ecNumber>3.1.1.4</ecNumber>
    </recommendedName>
    <alternativeName>
        <fullName>Bitis arietans nicotinic acetylcholine receptor inhibitor</fullName>
    </alternativeName>
    <alternativeName>
        <fullName>Phosphatidylcholine 2-acylhydrolase</fullName>
    </alternativeName>
</protein>
<sequence>SLIEFGKMITEETNRPVFPYEATIVVCDCGNGNGS</sequence>
<feature type="chain" id="PRO_0000420852" description="Phospholipase A2 bitanarin" evidence="2">
    <location>
        <begin position="1"/>
        <end position="35" status="greater than"/>
    </location>
</feature>
<feature type="disulfide bond" evidence="1">
    <location>
        <begin position="27"/>
        <end status="unknown"/>
    </location>
</feature>
<feature type="disulfide bond" evidence="1">
    <location>
        <begin position="29"/>
        <end status="unknown"/>
    </location>
</feature>
<feature type="non-consecutive residues" evidence="3">
    <location>
        <begin position="20"/>
        <end position="21"/>
    </location>
</feature>
<feature type="non-terminal residue">
    <location>
        <position position="35"/>
    </location>
</feature>
<name>PA2B_BITAR</name>
<keyword id="KW-0903">Direct protein sequencing</keyword>
<keyword id="KW-1015">Disulfide bond</keyword>
<keyword id="KW-0378">Hydrolase</keyword>
<keyword id="KW-0528">Neurotoxin</keyword>
<keyword id="KW-0629">Postsynaptic neurotoxin</keyword>
<keyword id="KW-0964">Secreted</keyword>
<keyword id="KW-0800">Toxin</keyword>
<comment type="function">
    <text evidence="2">Snake venom phospholipase A2 (PLA2) that is the first competitive blocker of nicotinic acetylcholine receptors (nAChRs) (PubMed:21333664). Competes with alpha-bungarotoxin for binding to nAChRs and acetylcholine binding proteins (AChBPs) and blocks acetylcholine-elicited current (PubMed:21333664). PLA2 catalyzes the calcium-dependent hydrolysis of the 2-acyl groups in 3-sn-phosphoglycerides (PubMed:21333664).</text>
</comment>
<comment type="catalytic activity">
    <reaction evidence="2">
        <text>a 1,2-diacyl-sn-glycero-3-phosphocholine + H2O = a 1-acyl-sn-glycero-3-phosphocholine + a fatty acid + H(+)</text>
        <dbReference type="Rhea" id="RHEA:15801"/>
        <dbReference type="ChEBI" id="CHEBI:15377"/>
        <dbReference type="ChEBI" id="CHEBI:15378"/>
        <dbReference type="ChEBI" id="CHEBI:28868"/>
        <dbReference type="ChEBI" id="CHEBI:57643"/>
        <dbReference type="ChEBI" id="CHEBI:58168"/>
        <dbReference type="EC" id="3.1.1.4"/>
    </reaction>
</comment>
<comment type="cofactor">
    <cofactor evidence="2">
        <name>Ca(2+)</name>
        <dbReference type="ChEBI" id="CHEBI:29108"/>
    </cofactor>
    <text evidence="2">Binds 1 Ca(2+) ion.</text>
</comment>
<comment type="biophysicochemical properties">
    <kinetics>
        <Vmax evidence="2">1.95 mmol/min/umol enzyme</Vmax>
    </kinetics>
</comment>
<comment type="subunit">
    <text evidence="2">Monomer.</text>
</comment>
<comment type="subcellular location">
    <subcellularLocation>
        <location evidence="2">Secreted</location>
    </subcellularLocation>
</comment>
<comment type="tissue specificity">
    <text evidence="4">Expressed by the venom gland.</text>
</comment>
<comment type="PTM">
    <text evidence="2">Contains 14 disulfide bonds.</text>
</comment>
<comment type="mass spectrometry"/>
<comment type="miscellaneous">
    <text evidence="4">Accounts for only about 0.5% of dry venom mass.</text>
</comment>
<comment type="miscellaneous">
    <text evidence="4">The molecular mass and the number of disulfide bonds are two times greater than that observed for other snake venom PLA2 molecules. This finding suggests that bitanarin may contain 2 repeats of the PLA2 sequence in a single polypeptide chain (PubMed:21333664).</text>
</comment>
<comment type="similarity">
    <text evidence="3">Belongs to the phospholipase A2 family. Group II subfamily.</text>
</comment>
<organism>
    <name type="scientific">Bitis arietans</name>
    <name type="common">African puff adder</name>
    <dbReference type="NCBI Taxonomy" id="8692"/>
    <lineage>
        <taxon>Eukaryota</taxon>
        <taxon>Metazoa</taxon>
        <taxon>Chordata</taxon>
        <taxon>Craniata</taxon>
        <taxon>Vertebrata</taxon>
        <taxon>Euteleostomi</taxon>
        <taxon>Lepidosauria</taxon>
        <taxon>Squamata</taxon>
        <taxon>Bifurcata</taxon>
        <taxon>Unidentata</taxon>
        <taxon>Episquamata</taxon>
        <taxon>Toxicofera</taxon>
        <taxon>Serpentes</taxon>
        <taxon>Colubroidea</taxon>
        <taxon>Viperidae</taxon>
        <taxon>Viperinae</taxon>
        <taxon>Bitis</taxon>
    </lineage>
</organism>
<dbReference type="EC" id="3.1.1.4"/>
<dbReference type="GO" id="GO:0005576">
    <property type="term" value="C:extracellular region"/>
    <property type="evidence" value="ECO:0007669"/>
    <property type="project" value="UniProtKB-SubCell"/>
</dbReference>
<dbReference type="GO" id="GO:0004623">
    <property type="term" value="F:phospholipase A2 activity"/>
    <property type="evidence" value="ECO:0007669"/>
    <property type="project" value="UniProtKB-EC"/>
</dbReference>
<dbReference type="GO" id="GO:0090729">
    <property type="term" value="F:toxin activity"/>
    <property type="evidence" value="ECO:0007669"/>
    <property type="project" value="UniProtKB-KW"/>
</dbReference>
<evidence type="ECO:0000250" key="1"/>
<evidence type="ECO:0000269" key="2">
    <source>
    </source>
</evidence>
<evidence type="ECO:0000305" key="3"/>
<evidence type="ECO:0000305" key="4">
    <source>
    </source>
</evidence>